<organism>
    <name type="scientific">Physcomitrium patens</name>
    <name type="common">Spreading-leaved earth moss</name>
    <name type="synonym">Physcomitrella patens</name>
    <dbReference type="NCBI Taxonomy" id="3218"/>
    <lineage>
        <taxon>Eukaryota</taxon>
        <taxon>Viridiplantae</taxon>
        <taxon>Streptophyta</taxon>
        <taxon>Embryophyta</taxon>
        <taxon>Bryophyta</taxon>
        <taxon>Bryophytina</taxon>
        <taxon>Bryopsida</taxon>
        <taxon>Funariidae</taxon>
        <taxon>Funariales</taxon>
        <taxon>Funariaceae</taxon>
        <taxon>Physcomitrium</taxon>
    </lineage>
</organism>
<comment type="function">
    <text evidence="1">A core subunit of photosystem II (PSII), probably helps stabilize the reaction center.</text>
</comment>
<comment type="subunit">
    <text evidence="1">PSII is composed of 1 copy each of membrane proteins PsbA, PsbB, PsbC, PsbD, PsbE, PsbF, PsbH, PsbI, PsbJ, PsbK, PsbL, PsbM, PsbT, PsbX, PsbY, PsbZ, Psb30/Ycf12, peripheral proteins of the oxygen-evolving complex and a large number of cofactors. It forms dimeric complexes.</text>
</comment>
<comment type="subcellular location">
    <subcellularLocation>
        <location evidence="1">Plastid</location>
        <location evidence="1">Chloroplast thylakoid membrane</location>
        <topology evidence="1">Single-pass membrane protein</topology>
    </subcellularLocation>
</comment>
<comment type="similarity">
    <text evidence="1">Belongs to the Psb30/Ycf12 family.</text>
</comment>
<dbReference type="EMBL" id="AP005672">
    <property type="protein sequence ID" value="BAC85065.1"/>
    <property type="molecule type" value="Genomic_DNA"/>
</dbReference>
<dbReference type="RefSeq" id="NP_904215.1">
    <property type="nucleotide sequence ID" value="NC_005087.1"/>
</dbReference>
<dbReference type="RefSeq" id="YP_009477545.1">
    <property type="nucleotide sequence ID" value="NC_037465.1"/>
</dbReference>
<dbReference type="SMR" id="P61051"/>
<dbReference type="STRING" id="3218.P61051"/>
<dbReference type="GeneID" id="2546730"/>
<dbReference type="GeneID" id="36487177"/>
<dbReference type="KEGG" id="ppp:2546730"/>
<dbReference type="InParanoid" id="P61051"/>
<dbReference type="OrthoDB" id="2015184at2759"/>
<dbReference type="Proteomes" id="UP000006727">
    <property type="component" value="Chloroplast"/>
</dbReference>
<dbReference type="GO" id="GO:0009535">
    <property type="term" value="C:chloroplast thylakoid membrane"/>
    <property type="evidence" value="ECO:0007669"/>
    <property type="project" value="UniProtKB-SubCell"/>
</dbReference>
<dbReference type="GO" id="GO:0009523">
    <property type="term" value="C:photosystem II"/>
    <property type="evidence" value="ECO:0007669"/>
    <property type="project" value="UniProtKB-KW"/>
</dbReference>
<dbReference type="GO" id="GO:0015979">
    <property type="term" value="P:photosynthesis"/>
    <property type="evidence" value="ECO:0007669"/>
    <property type="project" value="UniProtKB-KW"/>
</dbReference>
<dbReference type="HAMAP" id="MF_01329">
    <property type="entry name" value="PSII_Psb30_Ycf12"/>
    <property type="match status" value="1"/>
</dbReference>
<dbReference type="InterPro" id="IPR010284">
    <property type="entry name" value="PSII_Ycf12_core-subunit"/>
</dbReference>
<dbReference type="NCBIfam" id="NF010239">
    <property type="entry name" value="PRK13686.1"/>
    <property type="match status" value="1"/>
</dbReference>
<dbReference type="Pfam" id="PF05969">
    <property type="entry name" value="PSII_Ycf12"/>
    <property type="match status" value="1"/>
</dbReference>
<gene>
    <name evidence="1" type="primary">psb30</name>
    <name evidence="1" type="synonym">ycf12</name>
</gene>
<protein>
    <recommendedName>
        <fullName evidence="1">Photosystem II reaction center protein Psb30</fullName>
    </recommendedName>
    <alternativeName>
        <fullName evidence="1">Photosystem II reaction center protein Ycf12</fullName>
    </alternativeName>
</protein>
<keyword id="KW-0150">Chloroplast</keyword>
<keyword id="KW-0472">Membrane</keyword>
<keyword id="KW-0602">Photosynthesis</keyword>
<keyword id="KW-0604">Photosystem II</keyword>
<keyword id="KW-0934">Plastid</keyword>
<keyword id="KW-1185">Reference proteome</keyword>
<keyword id="KW-0793">Thylakoid</keyword>
<keyword id="KW-0812">Transmembrane</keyword>
<keyword id="KW-1133">Transmembrane helix</keyword>
<feature type="chain" id="PRO_0000059036" description="Photosystem II reaction center protein Psb30">
    <location>
        <begin position="1"/>
        <end position="33"/>
    </location>
</feature>
<feature type="transmembrane region" description="Helical" evidence="1">
    <location>
        <begin position="5"/>
        <end position="25"/>
    </location>
</feature>
<proteinExistence type="inferred from homology"/>
<name>PSB30_PHYPA</name>
<evidence type="ECO:0000255" key="1">
    <source>
        <dbReference type="HAMAP-Rule" id="MF_01329"/>
    </source>
</evidence>
<geneLocation type="chloroplast"/>
<reference key="1">
    <citation type="journal article" date="2003" name="Nucleic Acids Res.">
        <title>Complete chloroplast DNA sequence of the moss Physcomitrella patens: evidence for the loss and relocation of rpoA from the chloroplast to the nucleus.</title>
        <authorList>
            <person name="Sugiura C."/>
            <person name="Kobayashi Y."/>
            <person name="Setsuyuki A."/>
            <person name="Sugita C."/>
            <person name="Sugita M."/>
        </authorList>
    </citation>
    <scope>NUCLEOTIDE SEQUENCE [LARGE SCALE GENOMIC DNA]</scope>
    <source>
        <strain>cv. Gransden 2004</strain>
    </source>
</reference>
<sequence>MNLEVIAQLIALALIVGSGPLVIALLAARKGNL</sequence>
<accession>P61051</accession>